<accession>P62586</accession>
<accession>P42214</accession>
<reference key="1">
    <citation type="journal article" date="1993" name="J. Bacteriol.">
        <title>Molecular analysis of region 1 of the Escherichia coli K5 antigen gene cluster: a region encoding proteins involved in cell surface expression of capsular polysaccharide.</title>
        <authorList>
            <person name="Pazzani C."/>
            <person name="Rosenow C."/>
            <person name="Boulnois G.J."/>
            <person name="Bronner D."/>
            <person name="Jann K."/>
            <person name="Roberts I.S."/>
        </authorList>
    </citation>
    <scope>NUCLEOTIDE SEQUENCE [GENOMIC DNA]</scope>
    <source>
        <strain>K5</strain>
    </source>
</reference>
<dbReference type="EMBL" id="X74567">
    <property type="protein sequence ID" value="CAA52655.1"/>
    <property type="molecule type" value="Genomic_DNA"/>
</dbReference>
<dbReference type="PIR" id="A48492">
    <property type="entry name" value="A48492"/>
</dbReference>
<dbReference type="RefSeq" id="WP_000905920.1">
    <property type="nucleotide sequence ID" value="NZ_WWEL01000034.1"/>
</dbReference>
<dbReference type="SMR" id="P62586"/>
<dbReference type="OMA" id="ADQYHST"/>
<dbReference type="GO" id="GO:0009276">
    <property type="term" value="C:Gram-negative-bacterium-type cell wall"/>
    <property type="evidence" value="ECO:0007669"/>
    <property type="project" value="InterPro"/>
</dbReference>
<dbReference type="GO" id="GO:0005886">
    <property type="term" value="C:plasma membrane"/>
    <property type="evidence" value="ECO:0007669"/>
    <property type="project" value="UniProtKB-SubCell"/>
</dbReference>
<dbReference type="GO" id="GO:0005351">
    <property type="term" value="F:carbohydrate:proton symporter activity"/>
    <property type="evidence" value="ECO:0007669"/>
    <property type="project" value="InterPro"/>
</dbReference>
<dbReference type="GO" id="GO:0004713">
    <property type="term" value="F:protein tyrosine kinase activity"/>
    <property type="evidence" value="ECO:0007669"/>
    <property type="project" value="TreeGrafter"/>
</dbReference>
<dbReference type="GO" id="GO:0015774">
    <property type="term" value="P:polysaccharide transport"/>
    <property type="evidence" value="ECO:0007669"/>
    <property type="project" value="UniProtKB-KW"/>
</dbReference>
<dbReference type="InterPro" id="IPR050445">
    <property type="entry name" value="Bact_polysacc_biosynth/exp"/>
</dbReference>
<dbReference type="InterPro" id="IPR005705">
    <property type="entry name" value="BexC_CtrB_KpsE_VexD"/>
</dbReference>
<dbReference type="NCBIfam" id="TIGR01010">
    <property type="entry name" value="BexC_CtrB_KpsE"/>
    <property type="match status" value="1"/>
</dbReference>
<dbReference type="PANTHER" id="PTHR32309:SF13">
    <property type="entry name" value="FERRIC ENTEROBACTIN TRANSPORT PROTEIN FEPE"/>
    <property type="match status" value="1"/>
</dbReference>
<dbReference type="PANTHER" id="PTHR32309">
    <property type="entry name" value="TYROSINE-PROTEIN KINASE"/>
    <property type="match status" value="1"/>
</dbReference>
<gene>
    <name type="primary">kpsE</name>
</gene>
<organism>
    <name type="scientific">Escherichia coli</name>
    <dbReference type="NCBI Taxonomy" id="562"/>
    <lineage>
        <taxon>Bacteria</taxon>
        <taxon>Pseudomonadati</taxon>
        <taxon>Pseudomonadota</taxon>
        <taxon>Gammaproteobacteria</taxon>
        <taxon>Enterobacterales</taxon>
        <taxon>Enterobacteriaceae</taxon>
        <taxon>Escherichia</taxon>
    </lineage>
</organism>
<evidence type="ECO:0000255" key="1"/>
<evidence type="ECO:0000305" key="2"/>
<comment type="function">
    <text>Involved in the translocation of the polysialic acid capsule.</text>
</comment>
<comment type="subcellular location">
    <subcellularLocation>
        <location evidence="2">Cell inner membrane</location>
        <topology evidence="2">Multi-pass membrane protein</topology>
    </subcellularLocation>
</comment>
<comment type="similarity">
    <text evidence="2">Belongs to the BexC/CtrB/KpsE family.</text>
</comment>
<sequence>MLIKVKSAVSWMRARLSAISLADIQKHLAKIIILAPMAVLLIYLAIFSQPRYMSESKVAIKRSDDLNSGSLNFGLLLGASNPSSAEDALYLKEYINSPDMLAALDKQLNFREAFSHSGLDFLNHLSKDETAEGFLKYYKDRINVSYDDKTGLLNIQTQGFSPEFALKFNQTVLKESERFINEMSHRIARDQLAFAETEMEKARQRLDASKAELLSYQDNNNVLDPQAQAQAASTLVNTLMGQKIQMEADLRNLLTYLREDAPQVVSARNAIQSLQAQIDEEKSKITAPQGDKLNRMAVDFEEIKSKVEFNTELYKLTLTSIEKTRVEAARKLKVLSVISSPQLPQESSFPNIPYLIACWLLVCCLLFGTLKLLLAVIEDHRD</sequence>
<name>KPSE5_ECOLX</name>
<proteinExistence type="inferred from homology"/>
<feature type="chain" id="PRO_0000084317" description="Capsule polysaccharide export inner-membrane protein KpsE">
    <location>
        <begin position="1"/>
        <end position="382"/>
    </location>
</feature>
<feature type="transmembrane region" description="Helical" evidence="1">
    <location>
        <begin position="28"/>
        <end position="48"/>
    </location>
</feature>
<feature type="transmembrane region" description="Helical" evidence="1">
    <location>
        <begin position="357"/>
        <end position="377"/>
    </location>
</feature>
<keyword id="KW-0972">Capsule biogenesis/degradation</keyword>
<keyword id="KW-0997">Cell inner membrane</keyword>
<keyword id="KW-1003">Cell membrane</keyword>
<keyword id="KW-0472">Membrane</keyword>
<keyword id="KW-0625">Polysaccharide transport</keyword>
<keyword id="KW-0762">Sugar transport</keyword>
<keyword id="KW-0812">Transmembrane</keyword>
<keyword id="KW-1133">Transmembrane helix</keyword>
<keyword id="KW-0813">Transport</keyword>
<protein>
    <recommendedName>
        <fullName>Capsule polysaccharide export inner-membrane protein KpsE</fullName>
    </recommendedName>
</protein>